<sequence length="644" mass="72509">MFQDNPLLAQLKQQLHSQTPRAEGVVKATEKGFGFLEVDAQKSYFIPPPQMKKVMHGDRIIAVIHSEKERESAEPEELVEPFLTRFVGKVQGKNDRLAIVPDHPLLKDAIPCRAARGLNHEFKEGDWAVAEMRRHPLKGDRSFYAELTQYITFGDDHFVPWWVTLARHNLEKEAPDGVATEMLDEGLVREDLTALDFVTIDSASTEDMDDALFAKALPDDKLQLIVAIADPTAWIAEGSKLDKAAKIRAFTNYLPGFNIPMLPRELSDDLCSLRANEVRPVLACRMTLSADGTIEDNIEFFAATIESKAKLVYDQVSDWLENTGDWKPESEAIAEQVRLLAQICQRRGEWRHNHALVFKDRPDYRFILGEKGEVLDIVAEPRRIANRIVEEAMIAANICAARVLRDKLGFGIYNVHMGFDPANADALAALLKTHGLHVDAEEVLTLDGFCKLRRELDAQPTGFLDSRIRRFQSFAEISTEPGPHFGLGLEAYATWTSPIRKYGDMINHRLLKAVIKGETATRPQDEITVQMAERRRLNRMAERDVGDWLYARFLKDKAGTDTRFAAEIVDISRGGMRVRLVDNGAIAFIPAPFLHAVRDEMVCSQENGTVQIKGETVYKVTDVIDVTIAEVRMETRSIIARPVA</sequence>
<name>RNB_ECOLC</name>
<comment type="function">
    <text evidence="2">Involved in mRNA degradation. Hydrolyzes single-stranded polyribonucleotides processively in the 3' to 5' direction.</text>
</comment>
<comment type="catalytic activity">
    <reaction evidence="2">
        <text>Exonucleolytic cleavage in the 3'- to 5'-direction to yield nucleoside 5'-phosphates.</text>
        <dbReference type="EC" id="3.1.13.1"/>
    </reaction>
</comment>
<comment type="subcellular location">
    <subcellularLocation>
        <location evidence="2">Cytoplasm</location>
    </subcellularLocation>
</comment>
<comment type="similarity">
    <text evidence="2">Belongs to the RNR ribonuclease family. RNase II subfamily.</text>
</comment>
<organism>
    <name type="scientific">Escherichia coli (strain ATCC 8739 / DSM 1576 / NBRC 3972 / NCIMB 8545 / WDCM 00012 / Crooks)</name>
    <dbReference type="NCBI Taxonomy" id="481805"/>
    <lineage>
        <taxon>Bacteria</taxon>
        <taxon>Pseudomonadati</taxon>
        <taxon>Pseudomonadota</taxon>
        <taxon>Gammaproteobacteria</taxon>
        <taxon>Enterobacterales</taxon>
        <taxon>Enterobacteriaceae</taxon>
        <taxon>Escherichia</taxon>
    </lineage>
</organism>
<keyword id="KW-0963">Cytoplasm</keyword>
<keyword id="KW-0269">Exonuclease</keyword>
<keyword id="KW-0378">Hydrolase</keyword>
<keyword id="KW-0540">Nuclease</keyword>
<keyword id="KW-0694">RNA-binding</keyword>
<feature type="chain" id="PRO_1000084279" description="Exoribonuclease 2">
    <location>
        <begin position="1"/>
        <end position="644"/>
    </location>
</feature>
<feature type="domain" description="RNB" evidence="1">
    <location>
        <begin position="189"/>
        <end position="516"/>
    </location>
</feature>
<feature type="domain" description="S1 motif" evidence="2">
    <location>
        <begin position="561"/>
        <end position="643"/>
    </location>
</feature>
<evidence type="ECO:0000255" key="1"/>
<evidence type="ECO:0000255" key="2">
    <source>
        <dbReference type="HAMAP-Rule" id="MF_01036"/>
    </source>
</evidence>
<dbReference type="EC" id="3.1.13.1" evidence="2"/>
<dbReference type="EMBL" id="CP000946">
    <property type="protein sequence ID" value="ACA77974.1"/>
    <property type="molecule type" value="Genomic_DNA"/>
</dbReference>
<dbReference type="RefSeq" id="WP_000484979.1">
    <property type="nucleotide sequence ID" value="NZ_MTFT01000016.1"/>
</dbReference>
<dbReference type="SMR" id="B1ITG7"/>
<dbReference type="KEGG" id="ecl:EcolC_2339"/>
<dbReference type="HOGENOM" id="CLU_002333_7_3_6"/>
<dbReference type="GO" id="GO:0005829">
    <property type="term" value="C:cytosol"/>
    <property type="evidence" value="ECO:0007669"/>
    <property type="project" value="TreeGrafter"/>
</dbReference>
<dbReference type="GO" id="GO:0008859">
    <property type="term" value="F:exoribonuclease II activity"/>
    <property type="evidence" value="ECO:0007669"/>
    <property type="project" value="UniProtKB-UniRule"/>
</dbReference>
<dbReference type="GO" id="GO:0003723">
    <property type="term" value="F:RNA binding"/>
    <property type="evidence" value="ECO:0007669"/>
    <property type="project" value="UniProtKB-KW"/>
</dbReference>
<dbReference type="GO" id="GO:0006402">
    <property type="term" value="P:mRNA catabolic process"/>
    <property type="evidence" value="ECO:0007669"/>
    <property type="project" value="UniProtKB-UniRule"/>
</dbReference>
<dbReference type="FunFam" id="2.40.50.140:FF:000079">
    <property type="entry name" value="Exoribonuclease 2"/>
    <property type="match status" value="1"/>
</dbReference>
<dbReference type="FunFam" id="2.40.50.140:FF:000081">
    <property type="entry name" value="Exoribonuclease 2"/>
    <property type="match status" value="1"/>
</dbReference>
<dbReference type="FunFam" id="2.40.50.640:FF:000001">
    <property type="entry name" value="Exoribonuclease 2"/>
    <property type="match status" value="1"/>
</dbReference>
<dbReference type="Gene3D" id="2.40.50.640">
    <property type="match status" value="1"/>
</dbReference>
<dbReference type="Gene3D" id="2.40.50.140">
    <property type="entry name" value="Nucleic acid-binding proteins"/>
    <property type="match status" value="2"/>
</dbReference>
<dbReference type="HAMAP" id="MF_01036">
    <property type="entry name" value="RNase_II"/>
    <property type="match status" value="1"/>
</dbReference>
<dbReference type="InterPro" id="IPR011129">
    <property type="entry name" value="CSD"/>
</dbReference>
<dbReference type="InterPro" id="IPR012340">
    <property type="entry name" value="NA-bd_OB-fold"/>
</dbReference>
<dbReference type="InterPro" id="IPR013223">
    <property type="entry name" value="RNase_B_OB_dom"/>
</dbReference>
<dbReference type="InterPro" id="IPR011804">
    <property type="entry name" value="RNase_II"/>
</dbReference>
<dbReference type="InterPro" id="IPR001900">
    <property type="entry name" value="RNase_II/R"/>
</dbReference>
<dbReference type="InterPro" id="IPR022966">
    <property type="entry name" value="RNase_II/R_CS"/>
</dbReference>
<dbReference type="InterPro" id="IPR004476">
    <property type="entry name" value="RNase_II/RNase_R"/>
</dbReference>
<dbReference type="InterPro" id="IPR050180">
    <property type="entry name" value="RNR_Ribonuclease"/>
</dbReference>
<dbReference type="InterPro" id="IPR003029">
    <property type="entry name" value="S1_domain"/>
</dbReference>
<dbReference type="NCBIfam" id="TIGR00358">
    <property type="entry name" value="3_prime_RNase"/>
    <property type="match status" value="1"/>
</dbReference>
<dbReference type="NCBIfam" id="NF003455">
    <property type="entry name" value="PRK05054.1"/>
    <property type="match status" value="1"/>
</dbReference>
<dbReference type="NCBIfam" id="TIGR02062">
    <property type="entry name" value="RNase_B"/>
    <property type="match status" value="1"/>
</dbReference>
<dbReference type="PANTHER" id="PTHR23355:SF37">
    <property type="entry name" value="EXORIBONUCLEASE 2"/>
    <property type="match status" value="1"/>
</dbReference>
<dbReference type="PANTHER" id="PTHR23355">
    <property type="entry name" value="RIBONUCLEASE"/>
    <property type="match status" value="1"/>
</dbReference>
<dbReference type="Pfam" id="PF08206">
    <property type="entry name" value="OB_RNB"/>
    <property type="match status" value="1"/>
</dbReference>
<dbReference type="Pfam" id="PF00773">
    <property type="entry name" value="RNB"/>
    <property type="match status" value="1"/>
</dbReference>
<dbReference type="Pfam" id="PF00575">
    <property type="entry name" value="S1"/>
    <property type="match status" value="1"/>
</dbReference>
<dbReference type="SMART" id="SM00357">
    <property type="entry name" value="CSP"/>
    <property type="match status" value="1"/>
</dbReference>
<dbReference type="SMART" id="SM00955">
    <property type="entry name" value="RNB"/>
    <property type="match status" value="1"/>
</dbReference>
<dbReference type="SUPFAM" id="SSF50249">
    <property type="entry name" value="Nucleic acid-binding proteins"/>
    <property type="match status" value="4"/>
</dbReference>
<dbReference type="PROSITE" id="PS01175">
    <property type="entry name" value="RIBONUCLEASE_II"/>
    <property type="match status" value="1"/>
</dbReference>
<protein>
    <recommendedName>
        <fullName evidence="2">Exoribonuclease 2</fullName>
        <ecNumber evidence="2">3.1.13.1</ecNumber>
    </recommendedName>
    <alternativeName>
        <fullName evidence="2">Exoribonuclease II</fullName>
        <shortName evidence="2">RNase II</shortName>
        <shortName evidence="2">Ribonuclease II</shortName>
    </alternativeName>
</protein>
<reference key="1">
    <citation type="submission" date="2008-02" db="EMBL/GenBank/DDBJ databases">
        <title>Complete sequence of Escherichia coli C str. ATCC 8739.</title>
        <authorList>
            <person name="Copeland A."/>
            <person name="Lucas S."/>
            <person name="Lapidus A."/>
            <person name="Glavina del Rio T."/>
            <person name="Dalin E."/>
            <person name="Tice H."/>
            <person name="Bruce D."/>
            <person name="Goodwin L."/>
            <person name="Pitluck S."/>
            <person name="Kiss H."/>
            <person name="Brettin T."/>
            <person name="Detter J.C."/>
            <person name="Han C."/>
            <person name="Kuske C.R."/>
            <person name="Schmutz J."/>
            <person name="Larimer F."/>
            <person name="Land M."/>
            <person name="Hauser L."/>
            <person name="Kyrpides N."/>
            <person name="Mikhailova N."/>
            <person name="Ingram L."/>
            <person name="Richardson P."/>
        </authorList>
    </citation>
    <scope>NUCLEOTIDE SEQUENCE [LARGE SCALE GENOMIC DNA]</scope>
    <source>
        <strain>ATCC 8739 / DSM 1576 / NBRC 3972 / NCIMB 8545 / WDCM 00012 / Crooks</strain>
    </source>
</reference>
<proteinExistence type="inferred from homology"/>
<gene>
    <name evidence="2" type="primary">rnb</name>
    <name type="ordered locus">EcolC_2339</name>
</gene>
<accession>B1ITG7</accession>